<feature type="initiator methionine" description="Removed" evidence="3">
    <location>
        <position position="1"/>
    </location>
</feature>
<feature type="chain" id="PRO_0000187870" description="Thiol peroxidase">
    <location>
        <begin position="2"/>
        <end position="167"/>
    </location>
</feature>
<feature type="domain" description="Thioredoxin" evidence="1">
    <location>
        <begin position="18"/>
        <end position="167"/>
    </location>
</feature>
<feature type="active site" description="Cysteine sulfenic acid (-SOH) intermediate" evidence="1 4">
    <location>
        <position position="60"/>
    </location>
</feature>
<feature type="disulfide bond" description="Redox active" evidence="2 5">
    <location>
        <begin position="60"/>
        <end position="94"/>
    </location>
</feature>
<feature type="disulfide bond" description="Redox-active" evidence="1">
    <location>
        <begin position="60"/>
        <end position="94"/>
    </location>
</feature>
<feature type="strand" evidence="6">
    <location>
        <begin position="4"/>
        <end position="6"/>
    </location>
</feature>
<feature type="strand" evidence="6">
    <location>
        <begin position="9"/>
        <end position="11"/>
    </location>
</feature>
<feature type="strand" evidence="6">
    <location>
        <begin position="13"/>
        <end position="15"/>
    </location>
</feature>
<feature type="strand" evidence="6">
    <location>
        <begin position="28"/>
        <end position="31"/>
    </location>
</feature>
<feature type="strand" evidence="6">
    <location>
        <begin position="36"/>
        <end position="38"/>
    </location>
</feature>
<feature type="helix" evidence="6">
    <location>
        <begin position="39"/>
        <end position="42"/>
    </location>
</feature>
<feature type="strand" evidence="6">
    <location>
        <begin position="47"/>
        <end position="51"/>
    </location>
</feature>
<feature type="strand" evidence="7">
    <location>
        <begin position="55"/>
        <end position="58"/>
    </location>
</feature>
<feature type="helix" evidence="6">
    <location>
        <begin position="59"/>
        <end position="62"/>
    </location>
</feature>
<feature type="helix" evidence="6">
    <location>
        <begin position="64"/>
        <end position="74"/>
    </location>
</feature>
<feature type="strand" evidence="6">
    <location>
        <begin position="78"/>
        <end position="83"/>
    </location>
</feature>
<feature type="helix" evidence="6">
    <location>
        <begin position="87"/>
        <end position="89"/>
    </location>
</feature>
<feature type="helix" evidence="6">
    <location>
        <begin position="94"/>
        <end position="96"/>
    </location>
</feature>
<feature type="strand" evidence="6">
    <location>
        <begin position="102"/>
        <end position="106"/>
    </location>
</feature>
<feature type="helix" evidence="6">
    <location>
        <begin position="107"/>
        <end position="109"/>
    </location>
</feature>
<feature type="helix" evidence="6">
    <location>
        <begin position="112"/>
        <end position="116"/>
    </location>
</feature>
<feature type="turn" evidence="6">
    <location>
        <begin position="122"/>
        <end position="124"/>
    </location>
</feature>
<feature type="strand" evidence="6">
    <location>
        <begin position="130"/>
        <end position="134"/>
    </location>
</feature>
<feature type="strand" evidence="6">
    <location>
        <begin position="140"/>
        <end position="145"/>
    </location>
</feature>
<feature type="helix" evidence="6">
    <location>
        <begin position="156"/>
        <end position="166"/>
    </location>
</feature>
<reference key="1">
    <citation type="journal article" date="1997" name="Microbiology">
        <title>Sequencing and functional annotation of the Bacillus subtilis genes in the 200 kb rrnB-dnaB region.</title>
        <authorList>
            <person name="Lapidus A."/>
            <person name="Galleron N."/>
            <person name="Sorokin A."/>
            <person name="Ehrlich S.D."/>
        </authorList>
    </citation>
    <scope>NUCLEOTIDE SEQUENCE [GENOMIC DNA]</scope>
    <source>
        <strain>168</strain>
    </source>
</reference>
<reference key="2">
    <citation type="journal article" date="1997" name="Nature">
        <title>The complete genome sequence of the Gram-positive bacterium Bacillus subtilis.</title>
        <authorList>
            <person name="Kunst F."/>
            <person name="Ogasawara N."/>
            <person name="Moszer I."/>
            <person name="Albertini A.M."/>
            <person name="Alloni G."/>
            <person name="Azevedo V."/>
            <person name="Bertero M.G."/>
            <person name="Bessieres P."/>
            <person name="Bolotin A."/>
            <person name="Borchert S."/>
            <person name="Borriss R."/>
            <person name="Boursier L."/>
            <person name="Brans A."/>
            <person name="Braun M."/>
            <person name="Brignell S.C."/>
            <person name="Bron S."/>
            <person name="Brouillet S."/>
            <person name="Bruschi C.V."/>
            <person name="Caldwell B."/>
            <person name="Capuano V."/>
            <person name="Carter N.M."/>
            <person name="Choi S.-K."/>
            <person name="Codani J.-J."/>
            <person name="Connerton I.F."/>
            <person name="Cummings N.J."/>
            <person name="Daniel R.A."/>
            <person name="Denizot F."/>
            <person name="Devine K.M."/>
            <person name="Duesterhoeft A."/>
            <person name="Ehrlich S.D."/>
            <person name="Emmerson P.T."/>
            <person name="Entian K.-D."/>
            <person name="Errington J."/>
            <person name="Fabret C."/>
            <person name="Ferrari E."/>
            <person name="Foulger D."/>
            <person name="Fritz C."/>
            <person name="Fujita M."/>
            <person name="Fujita Y."/>
            <person name="Fuma S."/>
            <person name="Galizzi A."/>
            <person name="Galleron N."/>
            <person name="Ghim S.-Y."/>
            <person name="Glaser P."/>
            <person name="Goffeau A."/>
            <person name="Golightly E.J."/>
            <person name="Grandi G."/>
            <person name="Guiseppi G."/>
            <person name="Guy B.J."/>
            <person name="Haga K."/>
            <person name="Haiech J."/>
            <person name="Harwood C.R."/>
            <person name="Henaut A."/>
            <person name="Hilbert H."/>
            <person name="Holsappel S."/>
            <person name="Hosono S."/>
            <person name="Hullo M.-F."/>
            <person name="Itaya M."/>
            <person name="Jones L.-M."/>
            <person name="Joris B."/>
            <person name="Karamata D."/>
            <person name="Kasahara Y."/>
            <person name="Klaerr-Blanchard M."/>
            <person name="Klein C."/>
            <person name="Kobayashi Y."/>
            <person name="Koetter P."/>
            <person name="Koningstein G."/>
            <person name="Krogh S."/>
            <person name="Kumano M."/>
            <person name="Kurita K."/>
            <person name="Lapidus A."/>
            <person name="Lardinois S."/>
            <person name="Lauber J."/>
            <person name="Lazarevic V."/>
            <person name="Lee S.-M."/>
            <person name="Levine A."/>
            <person name="Liu H."/>
            <person name="Masuda S."/>
            <person name="Mauel C."/>
            <person name="Medigue C."/>
            <person name="Medina N."/>
            <person name="Mellado R.P."/>
            <person name="Mizuno M."/>
            <person name="Moestl D."/>
            <person name="Nakai S."/>
            <person name="Noback M."/>
            <person name="Noone D."/>
            <person name="O'Reilly M."/>
            <person name="Ogawa K."/>
            <person name="Ogiwara A."/>
            <person name="Oudega B."/>
            <person name="Park S.-H."/>
            <person name="Parro V."/>
            <person name="Pohl T.M."/>
            <person name="Portetelle D."/>
            <person name="Porwollik S."/>
            <person name="Prescott A.M."/>
            <person name="Presecan E."/>
            <person name="Pujic P."/>
            <person name="Purnelle B."/>
            <person name="Rapoport G."/>
            <person name="Rey M."/>
            <person name="Reynolds S."/>
            <person name="Rieger M."/>
            <person name="Rivolta C."/>
            <person name="Rocha E."/>
            <person name="Roche B."/>
            <person name="Rose M."/>
            <person name="Sadaie Y."/>
            <person name="Sato T."/>
            <person name="Scanlan E."/>
            <person name="Schleich S."/>
            <person name="Schroeter R."/>
            <person name="Scoffone F."/>
            <person name="Sekiguchi J."/>
            <person name="Sekowska A."/>
            <person name="Seror S.J."/>
            <person name="Serror P."/>
            <person name="Shin B.-S."/>
            <person name="Soldo B."/>
            <person name="Sorokin A."/>
            <person name="Tacconi E."/>
            <person name="Takagi T."/>
            <person name="Takahashi H."/>
            <person name="Takemaru K."/>
            <person name="Takeuchi M."/>
            <person name="Tamakoshi A."/>
            <person name="Tanaka T."/>
            <person name="Terpstra P."/>
            <person name="Tognoni A."/>
            <person name="Tosato V."/>
            <person name="Uchiyama S."/>
            <person name="Vandenbol M."/>
            <person name="Vannier F."/>
            <person name="Vassarotti A."/>
            <person name="Viari A."/>
            <person name="Wambutt R."/>
            <person name="Wedler E."/>
            <person name="Wedler H."/>
            <person name="Weitzenegger T."/>
            <person name="Winters P."/>
            <person name="Wipat A."/>
            <person name="Yamamoto H."/>
            <person name="Yamane K."/>
            <person name="Yasumoto K."/>
            <person name="Yata K."/>
            <person name="Yoshida K."/>
            <person name="Yoshikawa H.-F."/>
            <person name="Zumstein E."/>
            <person name="Yoshikawa H."/>
            <person name="Danchin A."/>
        </authorList>
    </citation>
    <scope>NUCLEOTIDE SEQUENCE [LARGE SCALE GENOMIC DNA]</scope>
    <source>
        <strain>168</strain>
    </source>
</reference>
<reference key="3">
    <citation type="journal article" date="1997" name="Electrophoresis">
        <title>First steps from a two-dimensional protein index towards a response-regulation map for Bacillus subtilis.</title>
        <authorList>
            <person name="Antelmann H."/>
            <person name="Bernhardt J."/>
            <person name="Schmid R."/>
            <person name="Mach H."/>
            <person name="Voelker U."/>
            <person name="Hecker M."/>
        </authorList>
    </citation>
    <scope>PROTEIN SEQUENCE OF 2-32</scope>
    <source>
        <strain>168 / IS58</strain>
    </source>
</reference>
<reference key="4">
    <citation type="journal article" date="2008" name="Biochem. Biophys. Res. Commun.">
        <title>Reversible conformational switch revealed by the redox structures of Bacillus subtilis thiol peroxidase.</title>
        <authorList>
            <person name="Lu J."/>
            <person name="Yang F."/>
            <person name="Li Y."/>
            <person name="Zhang X."/>
            <person name="Xia B."/>
            <person name="Jin C."/>
        </authorList>
    </citation>
    <scope>STRUCTURE BY NMR OF 1-167</scope>
    <scope>DISULFIDE BOND</scope>
</reference>
<protein>
    <recommendedName>
        <fullName evidence="1">Thiol peroxidase</fullName>
        <shortName evidence="1">Tpx</shortName>
        <ecNumber evidence="1">1.11.1.24</ecNumber>
    </recommendedName>
    <alternativeName>
        <fullName evidence="1">Peroxiredoxin tpx</fullName>
        <shortName evidence="1">Prx</shortName>
    </alternativeName>
    <alternativeName>
        <fullName evidence="1">Thioredoxin peroxidase</fullName>
    </alternativeName>
    <alternativeName>
        <fullName evidence="1">Thioredoxin-dependent peroxiredoxin</fullName>
    </alternativeName>
</protein>
<name>TPX_BACSU</name>
<proteinExistence type="evidence at protein level"/>
<evidence type="ECO:0000255" key="1">
    <source>
        <dbReference type="HAMAP-Rule" id="MF_00269"/>
    </source>
</evidence>
<evidence type="ECO:0000269" key="2">
    <source>
    </source>
</evidence>
<evidence type="ECO:0000269" key="3">
    <source>
    </source>
</evidence>
<evidence type="ECO:0000305" key="4">
    <source>
    </source>
</evidence>
<evidence type="ECO:0007744" key="5">
    <source>
        <dbReference type="PDB" id="2JSY"/>
    </source>
</evidence>
<evidence type="ECO:0007829" key="6">
    <source>
        <dbReference type="PDB" id="2JSY"/>
    </source>
</evidence>
<evidence type="ECO:0007829" key="7">
    <source>
        <dbReference type="PDB" id="2JSZ"/>
    </source>
</evidence>
<organism>
    <name type="scientific">Bacillus subtilis (strain 168)</name>
    <dbReference type="NCBI Taxonomy" id="224308"/>
    <lineage>
        <taxon>Bacteria</taxon>
        <taxon>Bacillati</taxon>
        <taxon>Bacillota</taxon>
        <taxon>Bacilli</taxon>
        <taxon>Bacillales</taxon>
        <taxon>Bacillaceae</taxon>
        <taxon>Bacillus</taxon>
    </lineage>
</organism>
<comment type="function">
    <text evidence="1">Thiol-specific peroxidase that catalyzes the reduction of hydrogen peroxide and organic hydroperoxides to water and alcohols, respectively. Plays a role in cell protection against oxidative stress by detoxifying peroxides.</text>
</comment>
<comment type="catalytic activity">
    <reaction evidence="1">
        <text>a hydroperoxide + [thioredoxin]-dithiol = an alcohol + [thioredoxin]-disulfide + H2O</text>
        <dbReference type="Rhea" id="RHEA:62620"/>
        <dbReference type="Rhea" id="RHEA-COMP:10698"/>
        <dbReference type="Rhea" id="RHEA-COMP:10700"/>
        <dbReference type="ChEBI" id="CHEBI:15377"/>
        <dbReference type="ChEBI" id="CHEBI:29950"/>
        <dbReference type="ChEBI" id="CHEBI:30879"/>
        <dbReference type="ChEBI" id="CHEBI:35924"/>
        <dbReference type="ChEBI" id="CHEBI:50058"/>
        <dbReference type="EC" id="1.11.1.24"/>
    </reaction>
</comment>
<comment type="subunit">
    <text evidence="1">Homodimer.</text>
</comment>
<comment type="induction">
    <text>By superoxide.</text>
</comment>
<comment type="miscellaneous">
    <text evidence="1">The active site is a conserved redox-active cysteine residue, the peroxidatic cysteine (C(P)), which makes the nucleophilic attack on the peroxide substrate. The peroxide oxidizes the C(P)-SH to cysteine sulfenic acid (C(P)-SOH), which then reacts with another cysteine residue, the resolving cysteine (C(R)), to form a disulfide bridge. The disulfide is subsequently reduced by an appropriate electron donor to complete the catalytic cycle. In this atypical 2-Cys peroxiredoxin, C(R) is present in the same subunit to form an intramolecular disulfide. The disulfide is subsequently reduced by thioredoxin.</text>
</comment>
<comment type="similarity">
    <text evidence="1">Belongs to the peroxiredoxin family. Tpx subfamily.</text>
</comment>
<accession>P80864</accession>
<keyword id="KW-0002">3D-structure</keyword>
<keyword id="KW-0049">Antioxidant</keyword>
<keyword id="KW-0903">Direct protein sequencing</keyword>
<keyword id="KW-1015">Disulfide bond</keyword>
<keyword id="KW-0560">Oxidoreductase</keyword>
<keyword id="KW-0575">Peroxidase</keyword>
<keyword id="KW-0676">Redox-active center</keyword>
<keyword id="KW-1185">Reference proteome</keyword>
<dbReference type="EC" id="1.11.1.24" evidence="1"/>
<dbReference type="EMBL" id="AF008220">
    <property type="protein sequence ID" value="AAC00316.1"/>
    <property type="molecule type" value="Genomic_DNA"/>
</dbReference>
<dbReference type="EMBL" id="AL009126">
    <property type="protein sequence ID" value="CAB14927.1"/>
    <property type="molecule type" value="Genomic_DNA"/>
</dbReference>
<dbReference type="PIR" id="F69992">
    <property type="entry name" value="F69992"/>
</dbReference>
<dbReference type="RefSeq" id="NP_390827.1">
    <property type="nucleotide sequence ID" value="NC_000964.3"/>
</dbReference>
<dbReference type="RefSeq" id="WP_003223506.1">
    <property type="nucleotide sequence ID" value="NZ_OZ025638.1"/>
</dbReference>
<dbReference type="PDB" id="2JSY">
    <property type="method" value="NMR"/>
    <property type="chains" value="A=1-167"/>
</dbReference>
<dbReference type="PDB" id="2JSZ">
    <property type="method" value="NMR"/>
    <property type="chains" value="A=1-167"/>
</dbReference>
<dbReference type="PDBsum" id="2JSY"/>
<dbReference type="PDBsum" id="2JSZ"/>
<dbReference type="BMRB" id="P80864"/>
<dbReference type="SMR" id="P80864"/>
<dbReference type="FunCoup" id="P80864">
    <property type="interactions" value="39"/>
</dbReference>
<dbReference type="IntAct" id="P80864">
    <property type="interactions" value="1"/>
</dbReference>
<dbReference type="MINT" id="P80864"/>
<dbReference type="STRING" id="224308.BSU29490"/>
<dbReference type="jPOST" id="P80864"/>
<dbReference type="PaxDb" id="224308-BSU29490"/>
<dbReference type="EnsemblBacteria" id="CAB14927">
    <property type="protein sequence ID" value="CAB14927"/>
    <property type="gene ID" value="BSU_29490"/>
</dbReference>
<dbReference type="GeneID" id="86872544"/>
<dbReference type="GeneID" id="937688"/>
<dbReference type="KEGG" id="bsu:BSU29490"/>
<dbReference type="PATRIC" id="fig|224308.179.peg.3204"/>
<dbReference type="eggNOG" id="COG2077">
    <property type="taxonomic scope" value="Bacteria"/>
</dbReference>
<dbReference type="InParanoid" id="P80864"/>
<dbReference type="OrthoDB" id="9781543at2"/>
<dbReference type="PhylomeDB" id="P80864"/>
<dbReference type="BioCyc" id="BSUB:BSU29490-MONOMER"/>
<dbReference type="EvolutionaryTrace" id="P80864"/>
<dbReference type="PRO" id="PR:P80864"/>
<dbReference type="Proteomes" id="UP000001570">
    <property type="component" value="Chromosome"/>
</dbReference>
<dbReference type="GO" id="GO:0008379">
    <property type="term" value="F:thioredoxin peroxidase activity"/>
    <property type="evidence" value="ECO:0007669"/>
    <property type="project" value="UniProtKB-UniRule"/>
</dbReference>
<dbReference type="CDD" id="cd03014">
    <property type="entry name" value="PRX_Atyp2cys"/>
    <property type="match status" value="1"/>
</dbReference>
<dbReference type="Gene3D" id="3.40.30.10">
    <property type="entry name" value="Glutaredoxin"/>
    <property type="match status" value="1"/>
</dbReference>
<dbReference type="HAMAP" id="MF_00269">
    <property type="entry name" value="Tpx"/>
    <property type="match status" value="1"/>
</dbReference>
<dbReference type="InterPro" id="IPR013740">
    <property type="entry name" value="Redoxin"/>
</dbReference>
<dbReference type="InterPro" id="IPR036249">
    <property type="entry name" value="Thioredoxin-like_sf"/>
</dbReference>
<dbReference type="InterPro" id="IPR013766">
    <property type="entry name" value="Thioredoxin_domain"/>
</dbReference>
<dbReference type="InterPro" id="IPR002065">
    <property type="entry name" value="TPX"/>
</dbReference>
<dbReference type="InterPro" id="IPR018219">
    <property type="entry name" value="Tpx_CS"/>
</dbReference>
<dbReference type="InterPro" id="IPR050455">
    <property type="entry name" value="Tpx_Peroxidase_subfamily"/>
</dbReference>
<dbReference type="NCBIfam" id="NF001808">
    <property type="entry name" value="PRK00522.1"/>
    <property type="match status" value="1"/>
</dbReference>
<dbReference type="PANTHER" id="PTHR43110">
    <property type="entry name" value="THIOL PEROXIDASE"/>
    <property type="match status" value="1"/>
</dbReference>
<dbReference type="PANTHER" id="PTHR43110:SF1">
    <property type="entry name" value="THIOL PEROXIDASE"/>
    <property type="match status" value="1"/>
</dbReference>
<dbReference type="Pfam" id="PF08534">
    <property type="entry name" value="Redoxin"/>
    <property type="match status" value="1"/>
</dbReference>
<dbReference type="SUPFAM" id="SSF52833">
    <property type="entry name" value="Thioredoxin-like"/>
    <property type="match status" value="1"/>
</dbReference>
<dbReference type="PROSITE" id="PS51352">
    <property type="entry name" value="THIOREDOXIN_2"/>
    <property type="match status" value="1"/>
</dbReference>
<dbReference type="PROSITE" id="PS01265">
    <property type="entry name" value="TPX"/>
    <property type="match status" value="1"/>
</dbReference>
<sequence>MAEITFKGGPVTLVGQEVKVGDQAPDFTVLTNSLEEKSLADMKGKVTIISVIPSIDTGVCDAQTRRFNEEAAKLGDVNVYTISADLPFAQARWCGANGIDKVETLSDHRDMSFGEAFGVYIKELRLLARSVFVLDENGKVVYAEYVSEATNHPNYEKPIEAAKALVK</sequence>
<gene>
    <name evidence="1" type="primary">tpx</name>
    <name type="synonym">ytgI</name>
    <name type="ordered locus">BSU29490</name>
</gene>